<feature type="chain" id="PRO_0000360786" description="Sensor histidine kinase YvfT">
    <location>
        <begin position="1"/>
        <end position="371"/>
    </location>
</feature>
<feature type="topological domain" description="Extracellular" evidence="2">
    <location>
        <begin position="1"/>
        <end position="10"/>
    </location>
</feature>
<feature type="transmembrane region" description="Helical" evidence="2">
    <location>
        <begin position="11"/>
        <end position="31"/>
    </location>
</feature>
<feature type="topological domain" description="Cytoplasmic" evidence="2">
    <location>
        <begin position="32"/>
        <end position="38"/>
    </location>
</feature>
<feature type="transmembrane region" description="Helical" evidence="2">
    <location>
        <begin position="39"/>
        <end position="59"/>
    </location>
</feature>
<feature type="topological domain" description="Extracellular" evidence="2">
    <location>
        <begin position="60"/>
        <end position="71"/>
    </location>
</feature>
<feature type="transmembrane region" description="Helical" evidence="2">
    <location>
        <begin position="72"/>
        <end position="92"/>
    </location>
</feature>
<feature type="topological domain" description="Cytoplasmic" evidence="2">
    <location>
        <begin position="93"/>
        <end position="109"/>
    </location>
</feature>
<feature type="transmembrane region" description="Helical" evidence="2">
    <location>
        <begin position="110"/>
        <end position="130"/>
    </location>
</feature>
<feature type="topological domain" description="Extracellular" evidence="2">
    <location>
        <begin position="131"/>
        <end position="135"/>
    </location>
</feature>
<feature type="transmembrane region" description="Helical" evidence="2">
    <location>
        <begin position="136"/>
        <end position="156"/>
    </location>
</feature>
<feature type="topological domain" description="Cytoplasmic" evidence="2">
    <location>
        <begin position="157"/>
        <end position="371"/>
    </location>
</feature>
<feature type="domain" description="Histidine kinase">
    <location>
        <begin position="187"/>
        <end position="368"/>
    </location>
</feature>
<feature type="modified residue" description="Phosphohistidine; by autocatalysis" evidence="1">
    <location>
        <position position="189"/>
    </location>
</feature>
<name>YVFT_BACSU</name>
<sequence>MKKAISIFPKEFGFFPYIFLVYTIMPFLSLLKESGVKQGIGYGMLLLFVAAYRQLFCSVGKASFTYWLIVQMAVILMYSVFYNITYIYLGFFPANFVGYYKEKTNFNRAFCALIFILLFPCLYQFIANSVSLRELFSVLPFLVIMLISPFGIRSMFRRIELEAKLAQANEQIKELSKREERVRIARDLHDTLGHTLSLLTLKSQLIQRLAASDPERTKLEAKEMETSSRSALKQVRELVSDMRTVTITEELVNIQHILRAGNITFQYEGADDFSVISPVTQNIISMCMREAVTNIIKHSKATHCAITISQFADKMRIVIRDDGKGAPKEKMFGNGLWGMEERLMLIEGGLTVSDHNGTVVALTIPLIKKAE</sequence>
<reference key="1">
    <citation type="submission" date="1997-04" db="EMBL/GenBank/DDBJ databases">
        <authorList>
            <person name="Denizot F."/>
        </authorList>
    </citation>
    <scope>NUCLEOTIDE SEQUENCE [GENOMIC DNA]</scope>
    <source>
        <strain>168</strain>
    </source>
</reference>
<reference key="2">
    <citation type="journal article" date="1997" name="Nature">
        <title>The complete genome sequence of the Gram-positive bacterium Bacillus subtilis.</title>
        <authorList>
            <person name="Kunst F."/>
            <person name="Ogasawara N."/>
            <person name="Moszer I."/>
            <person name="Albertini A.M."/>
            <person name="Alloni G."/>
            <person name="Azevedo V."/>
            <person name="Bertero M.G."/>
            <person name="Bessieres P."/>
            <person name="Bolotin A."/>
            <person name="Borchert S."/>
            <person name="Borriss R."/>
            <person name="Boursier L."/>
            <person name="Brans A."/>
            <person name="Braun M."/>
            <person name="Brignell S.C."/>
            <person name="Bron S."/>
            <person name="Brouillet S."/>
            <person name="Bruschi C.V."/>
            <person name="Caldwell B."/>
            <person name="Capuano V."/>
            <person name="Carter N.M."/>
            <person name="Choi S.-K."/>
            <person name="Codani J.-J."/>
            <person name="Connerton I.F."/>
            <person name="Cummings N.J."/>
            <person name="Daniel R.A."/>
            <person name="Denizot F."/>
            <person name="Devine K.M."/>
            <person name="Duesterhoeft A."/>
            <person name="Ehrlich S.D."/>
            <person name="Emmerson P.T."/>
            <person name="Entian K.-D."/>
            <person name="Errington J."/>
            <person name="Fabret C."/>
            <person name="Ferrari E."/>
            <person name="Foulger D."/>
            <person name="Fritz C."/>
            <person name="Fujita M."/>
            <person name="Fujita Y."/>
            <person name="Fuma S."/>
            <person name="Galizzi A."/>
            <person name="Galleron N."/>
            <person name="Ghim S.-Y."/>
            <person name="Glaser P."/>
            <person name="Goffeau A."/>
            <person name="Golightly E.J."/>
            <person name="Grandi G."/>
            <person name="Guiseppi G."/>
            <person name="Guy B.J."/>
            <person name="Haga K."/>
            <person name="Haiech J."/>
            <person name="Harwood C.R."/>
            <person name="Henaut A."/>
            <person name="Hilbert H."/>
            <person name="Holsappel S."/>
            <person name="Hosono S."/>
            <person name="Hullo M.-F."/>
            <person name="Itaya M."/>
            <person name="Jones L.-M."/>
            <person name="Joris B."/>
            <person name="Karamata D."/>
            <person name="Kasahara Y."/>
            <person name="Klaerr-Blanchard M."/>
            <person name="Klein C."/>
            <person name="Kobayashi Y."/>
            <person name="Koetter P."/>
            <person name="Koningstein G."/>
            <person name="Krogh S."/>
            <person name="Kumano M."/>
            <person name="Kurita K."/>
            <person name="Lapidus A."/>
            <person name="Lardinois S."/>
            <person name="Lauber J."/>
            <person name="Lazarevic V."/>
            <person name="Lee S.-M."/>
            <person name="Levine A."/>
            <person name="Liu H."/>
            <person name="Masuda S."/>
            <person name="Mauel C."/>
            <person name="Medigue C."/>
            <person name="Medina N."/>
            <person name="Mellado R.P."/>
            <person name="Mizuno M."/>
            <person name="Moestl D."/>
            <person name="Nakai S."/>
            <person name="Noback M."/>
            <person name="Noone D."/>
            <person name="O'Reilly M."/>
            <person name="Ogawa K."/>
            <person name="Ogiwara A."/>
            <person name="Oudega B."/>
            <person name="Park S.-H."/>
            <person name="Parro V."/>
            <person name="Pohl T.M."/>
            <person name="Portetelle D."/>
            <person name="Porwollik S."/>
            <person name="Prescott A.M."/>
            <person name="Presecan E."/>
            <person name="Pujic P."/>
            <person name="Purnelle B."/>
            <person name="Rapoport G."/>
            <person name="Rey M."/>
            <person name="Reynolds S."/>
            <person name="Rieger M."/>
            <person name="Rivolta C."/>
            <person name="Rocha E."/>
            <person name="Roche B."/>
            <person name="Rose M."/>
            <person name="Sadaie Y."/>
            <person name="Sato T."/>
            <person name="Scanlan E."/>
            <person name="Schleich S."/>
            <person name="Schroeter R."/>
            <person name="Scoffone F."/>
            <person name="Sekiguchi J."/>
            <person name="Sekowska A."/>
            <person name="Seror S.J."/>
            <person name="Serror P."/>
            <person name="Shin B.-S."/>
            <person name="Soldo B."/>
            <person name="Sorokin A."/>
            <person name="Tacconi E."/>
            <person name="Takagi T."/>
            <person name="Takahashi H."/>
            <person name="Takemaru K."/>
            <person name="Takeuchi M."/>
            <person name="Tamakoshi A."/>
            <person name="Tanaka T."/>
            <person name="Terpstra P."/>
            <person name="Tognoni A."/>
            <person name="Tosato V."/>
            <person name="Uchiyama S."/>
            <person name="Vandenbol M."/>
            <person name="Vannier F."/>
            <person name="Vassarotti A."/>
            <person name="Viari A."/>
            <person name="Wambutt R."/>
            <person name="Wedler E."/>
            <person name="Wedler H."/>
            <person name="Weitzenegger T."/>
            <person name="Winters P."/>
            <person name="Wipat A."/>
            <person name="Yamamoto H."/>
            <person name="Yamane K."/>
            <person name="Yasumoto K."/>
            <person name="Yata K."/>
            <person name="Yoshida K."/>
            <person name="Yoshikawa H.-F."/>
            <person name="Zumstein E."/>
            <person name="Yoshikawa H."/>
            <person name="Danchin A."/>
        </authorList>
    </citation>
    <scope>NUCLEOTIDE SEQUENCE [LARGE SCALE GENOMIC DNA]</scope>
    <source>
        <strain>168</strain>
    </source>
</reference>
<reference key="3">
    <citation type="journal article" date="2001" name="J. Bacteriol.">
        <title>Comprehensive DNA microarray analysis of Bacillus subtilis two-component regulatory systems.</title>
        <authorList>
            <person name="Kobayashi K."/>
            <person name="Ogura M."/>
            <person name="Yamaguchi H."/>
            <person name="Yoshida K."/>
            <person name="Ogasawara N."/>
            <person name="Tanaka T."/>
            <person name="Fujita Y."/>
        </authorList>
    </citation>
    <scope>FUNCTION</scope>
</reference>
<gene>
    <name type="primary">yvfT</name>
    <name type="ordered locus">BSU34070</name>
</gene>
<evidence type="ECO:0000250" key="1"/>
<evidence type="ECO:0000255" key="2"/>
<evidence type="ECO:0000269" key="3">
    <source>
    </source>
</evidence>
<evidence type="ECO:0000305" key="4"/>
<organism>
    <name type="scientific">Bacillus subtilis (strain 168)</name>
    <dbReference type="NCBI Taxonomy" id="224308"/>
    <lineage>
        <taxon>Bacteria</taxon>
        <taxon>Bacillati</taxon>
        <taxon>Bacillota</taxon>
        <taxon>Bacilli</taxon>
        <taxon>Bacillales</taxon>
        <taxon>Bacillaceae</taxon>
        <taxon>Bacillus</taxon>
    </lineage>
</organism>
<accession>Q795K2</accession>
<accession>O07018</accession>
<proteinExistence type="inferred from homology"/>
<keyword id="KW-0067">ATP-binding</keyword>
<keyword id="KW-1003">Cell membrane</keyword>
<keyword id="KW-0418">Kinase</keyword>
<keyword id="KW-0472">Membrane</keyword>
<keyword id="KW-0547">Nucleotide-binding</keyword>
<keyword id="KW-0597">Phosphoprotein</keyword>
<keyword id="KW-1185">Reference proteome</keyword>
<keyword id="KW-0808">Transferase</keyword>
<keyword id="KW-0812">Transmembrane</keyword>
<keyword id="KW-1133">Transmembrane helix</keyword>
<keyword id="KW-0902">Two-component regulatory system</keyword>
<protein>
    <recommendedName>
        <fullName>Sensor histidine kinase YvfT</fullName>
        <ecNumber>2.7.13.3</ecNumber>
    </recommendedName>
</protein>
<comment type="function">
    <text evidence="3">Member of the two-component regulatory system YvfT/YvfU. Probably activates YvfU by phosphorylation.</text>
</comment>
<comment type="catalytic activity">
    <reaction>
        <text>ATP + protein L-histidine = ADP + protein N-phospho-L-histidine.</text>
        <dbReference type="EC" id="2.7.13.3"/>
    </reaction>
</comment>
<comment type="subcellular location">
    <subcellularLocation>
        <location evidence="4">Cell membrane</location>
        <topology evidence="4">Multi-pass membrane protein</topology>
    </subcellularLocation>
</comment>
<dbReference type="EC" id="2.7.13.3"/>
<dbReference type="EMBL" id="Z94043">
    <property type="protein sequence ID" value="CAB07990.1"/>
    <property type="molecule type" value="Genomic_DNA"/>
</dbReference>
<dbReference type="EMBL" id="AL009126">
    <property type="protein sequence ID" value="CAB15412.2"/>
    <property type="molecule type" value="Genomic_DNA"/>
</dbReference>
<dbReference type="PIR" id="C70039">
    <property type="entry name" value="C70039"/>
</dbReference>
<dbReference type="RefSeq" id="NP_391287.2">
    <property type="nucleotide sequence ID" value="NC_000964.3"/>
</dbReference>
<dbReference type="RefSeq" id="WP_003228300.1">
    <property type="nucleotide sequence ID" value="NZ_OZ025638.1"/>
</dbReference>
<dbReference type="SMR" id="Q795K2"/>
<dbReference type="FunCoup" id="Q795K2">
    <property type="interactions" value="236"/>
</dbReference>
<dbReference type="STRING" id="224308.BSU34070"/>
<dbReference type="PaxDb" id="224308-BSU34070"/>
<dbReference type="EnsemblBacteria" id="CAB15412">
    <property type="protein sequence ID" value="CAB15412"/>
    <property type="gene ID" value="BSU_34070"/>
</dbReference>
<dbReference type="GeneID" id="937702"/>
<dbReference type="KEGG" id="bsu:BSU34070"/>
<dbReference type="PATRIC" id="fig|224308.179.peg.3693"/>
<dbReference type="eggNOG" id="COG4585">
    <property type="taxonomic scope" value="Bacteria"/>
</dbReference>
<dbReference type="InParanoid" id="Q795K2"/>
<dbReference type="OrthoDB" id="9797605at2"/>
<dbReference type="BioCyc" id="BSUB:BSU34070-MONOMER"/>
<dbReference type="Proteomes" id="UP000001570">
    <property type="component" value="Chromosome"/>
</dbReference>
<dbReference type="GO" id="GO:0005886">
    <property type="term" value="C:plasma membrane"/>
    <property type="evidence" value="ECO:0000318"/>
    <property type="project" value="GO_Central"/>
</dbReference>
<dbReference type="GO" id="GO:0005524">
    <property type="term" value="F:ATP binding"/>
    <property type="evidence" value="ECO:0007669"/>
    <property type="project" value="UniProtKB-KW"/>
</dbReference>
<dbReference type="GO" id="GO:0000155">
    <property type="term" value="F:phosphorelay sensor kinase activity"/>
    <property type="evidence" value="ECO:0007669"/>
    <property type="project" value="InterPro"/>
</dbReference>
<dbReference type="GO" id="GO:0046983">
    <property type="term" value="F:protein dimerization activity"/>
    <property type="evidence" value="ECO:0007669"/>
    <property type="project" value="InterPro"/>
</dbReference>
<dbReference type="GO" id="GO:0004672">
    <property type="term" value="F:protein kinase activity"/>
    <property type="evidence" value="ECO:0000318"/>
    <property type="project" value="GO_Central"/>
</dbReference>
<dbReference type="CDD" id="cd16917">
    <property type="entry name" value="HATPase_UhpB-NarQ-NarX-like"/>
    <property type="match status" value="1"/>
</dbReference>
<dbReference type="Gene3D" id="1.20.5.1930">
    <property type="match status" value="1"/>
</dbReference>
<dbReference type="Gene3D" id="3.30.565.10">
    <property type="entry name" value="Histidine kinase-like ATPase, C-terminal domain"/>
    <property type="match status" value="1"/>
</dbReference>
<dbReference type="InterPro" id="IPR056374">
    <property type="entry name" value="DesK/YvfT_N"/>
</dbReference>
<dbReference type="InterPro" id="IPR036890">
    <property type="entry name" value="HATPase_C_sf"/>
</dbReference>
<dbReference type="InterPro" id="IPR050482">
    <property type="entry name" value="Sensor_HK_TwoCompSys"/>
</dbReference>
<dbReference type="InterPro" id="IPR011712">
    <property type="entry name" value="Sig_transdc_His_kin_sub3_dim/P"/>
</dbReference>
<dbReference type="PANTHER" id="PTHR24421">
    <property type="entry name" value="NITRATE/NITRITE SENSOR PROTEIN NARX-RELATED"/>
    <property type="match status" value="1"/>
</dbReference>
<dbReference type="PANTHER" id="PTHR24421:SF63">
    <property type="entry name" value="SENSOR HISTIDINE KINASE DESK"/>
    <property type="match status" value="1"/>
</dbReference>
<dbReference type="Pfam" id="PF23540">
    <property type="entry name" value="DesK_N"/>
    <property type="match status" value="1"/>
</dbReference>
<dbReference type="Pfam" id="PF02518">
    <property type="entry name" value="HATPase_c"/>
    <property type="match status" value="1"/>
</dbReference>
<dbReference type="Pfam" id="PF07730">
    <property type="entry name" value="HisKA_3"/>
    <property type="match status" value="1"/>
</dbReference>
<dbReference type="SUPFAM" id="SSF55874">
    <property type="entry name" value="ATPase domain of HSP90 chaperone/DNA topoisomerase II/histidine kinase"/>
    <property type="match status" value="1"/>
</dbReference>